<feature type="chain" id="PRO_0000340455" description="Urease accessory protein UreD">
    <location>
        <begin position="1"/>
        <end position="312"/>
    </location>
</feature>
<feature type="region of interest" description="Disordered" evidence="2">
    <location>
        <begin position="1"/>
        <end position="24"/>
    </location>
</feature>
<feature type="compositionally biased region" description="Basic and acidic residues" evidence="2">
    <location>
        <begin position="1"/>
        <end position="15"/>
    </location>
</feature>
<protein>
    <recommendedName>
        <fullName evidence="1">Urease accessory protein UreD</fullName>
    </recommendedName>
</protein>
<evidence type="ECO:0000255" key="1">
    <source>
        <dbReference type="HAMAP-Rule" id="MF_01384"/>
    </source>
</evidence>
<evidence type="ECO:0000256" key="2">
    <source>
        <dbReference type="SAM" id="MobiDB-lite"/>
    </source>
</evidence>
<evidence type="ECO:0000305" key="3"/>
<name>URED_HAHCH</name>
<sequence>MLAEQFTDKNKHAEQELSPGSSAVTGARNWRASLTLNLTKESNRTILKQAAHQGPLRVQRPFYPEGAQRPHIYILHPPGGLVCGDEIEIDAKLEHGAEALLTTPSAGKIYRTDAAGHRQCQTVRLNCADAQSLEWLPQENIIYDGAEGAQTLLLETSAASRFIAWEITALGRPAADAPFASGAFTQTTRILRDSAPCFFERVALRGEGPGFQEPWGLQGQQVYGSLLAGYVQDSPQKRLQQCREALQANTAIAALGDSKDLRWTLTRKDDLIILRALCQQSEPIKRLFMAAWSLLRPALIGVESHPPRIWAT</sequence>
<keyword id="KW-0143">Chaperone</keyword>
<keyword id="KW-0963">Cytoplasm</keyword>
<keyword id="KW-0996">Nickel insertion</keyword>
<keyword id="KW-1185">Reference proteome</keyword>
<organism>
    <name type="scientific">Hahella chejuensis (strain KCTC 2396)</name>
    <dbReference type="NCBI Taxonomy" id="349521"/>
    <lineage>
        <taxon>Bacteria</taxon>
        <taxon>Pseudomonadati</taxon>
        <taxon>Pseudomonadota</taxon>
        <taxon>Gammaproteobacteria</taxon>
        <taxon>Oceanospirillales</taxon>
        <taxon>Hahellaceae</taxon>
        <taxon>Hahella</taxon>
    </lineage>
</organism>
<gene>
    <name evidence="1" type="primary">ureD</name>
    <name type="ordered locus">HCH_04520</name>
</gene>
<accession>Q2SDQ4</accession>
<reference key="1">
    <citation type="journal article" date="2005" name="Nucleic Acids Res.">
        <title>Genomic blueprint of Hahella chejuensis, a marine microbe producing an algicidal agent.</title>
        <authorList>
            <person name="Jeong H."/>
            <person name="Yim J.H."/>
            <person name="Lee C."/>
            <person name="Choi S.-H."/>
            <person name="Park Y.K."/>
            <person name="Yoon S.H."/>
            <person name="Hur C.-G."/>
            <person name="Kang H.-Y."/>
            <person name="Kim D."/>
            <person name="Lee H.H."/>
            <person name="Park K.H."/>
            <person name="Park S.-H."/>
            <person name="Park H.-S."/>
            <person name="Lee H.K."/>
            <person name="Oh T.K."/>
            <person name="Kim J.F."/>
        </authorList>
    </citation>
    <scope>NUCLEOTIDE SEQUENCE [LARGE SCALE GENOMIC DNA]</scope>
    <source>
        <strain>KCTC 2396</strain>
    </source>
</reference>
<dbReference type="EMBL" id="CP000155">
    <property type="protein sequence ID" value="ABC31220.1"/>
    <property type="status" value="ALT_INIT"/>
    <property type="molecule type" value="Genomic_DNA"/>
</dbReference>
<dbReference type="SMR" id="Q2SDQ4"/>
<dbReference type="STRING" id="349521.HCH_04520"/>
<dbReference type="KEGG" id="hch:HCH_04520"/>
<dbReference type="eggNOG" id="COG0829">
    <property type="taxonomic scope" value="Bacteria"/>
</dbReference>
<dbReference type="HOGENOM" id="CLU_056339_0_0_6"/>
<dbReference type="Proteomes" id="UP000000238">
    <property type="component" value="Chromosome"/>
</dbReference>
<dbReference type="GO" id="GO:0005737">
    <property type="term" value="C:cytoplasm"/>
    <property type="evidence" value="ECO:0007669"/>
    <property type="project" value="UniProtKB-SubCell"/>
</dbReference>
<dbReference type="GO" id="GO:0016151">
    <property type="term" value="F:nickel cation binding"/>
    <property type="evidence" value="ECO:0007669"/>
    <property type="project" value="UniProtKB-UniRule"/>
</dbReference>
<dbReference type="HAMAP" id="MF_01384">
    <property type="entry name" value="UreD"/>
    <property type="match status" value="1"/>
</dbReference>
<dbReference type="InterPro" id="IPR002669">
    <property type="entry name" value="UreD"/>
</dbReference>
<dbReference type="PANTHER" id="PTHR33643">
    <property type="entry name" value="UREASE ACCESSORY PROTEIN D"/>
    <property type="match status" value="1"/>
</dbReference>
<dbReference type="PANTHER" id="PTHR33643:SF1">
    <property type="entry name" value="UREASE ACCESSORY PROTEIN D"/>
    <property type="match status" value="1"/>
</dbReference>
<dbReference type="Pfam" id="PF01774">
    <property type="entry name" value="UreD"/>
    <property type="match status" value="1"/>
</dbReference>
<comment type="function">
    <text evidence="1">Required for maturation of urease via the functional incorporation of the urease nickel metallocenter.</text>
</comment>
<comment type="subunit">
    <text evidence="1">UreD, UreF and UreG form a complex that acts as a GTP-hydrolysis-dependent molecular chaperone, activating the urease apoprotein by helping to assemble the nickel containing metallocenter of UreC. The UreE protein probably delivers the nickel.</text>
</comment>
<comment type="subcellular location">
    <subcellularLocation>
        <location evidence="1">Cytoplasm</location>
    </subcellularLocation>
</comment>
<comment type="similarity">
    <text evidence="1">Belongs to the UreD family.</text>
</comment>
<comment type="sequence caution" evidence="3">
    <conflict type="erroneous initiation">
        <sequence resource="EMBL-CDS" id="ABC31220"/>
    </conflict>
</comment>
<proteinExistence type="inferred from homology"/>